<dbReference type="EC" id="4.6.1.12" evidence="1"/>
<dbReference type="EMBL" id="AL513382">
    <property type="protein sequence ID" value="CAD06035.1"/>
    <property type="molecule type" value="Genomic_DNA"/>
</dbReference>
<dbReference type="EMBL" id="AE014613">
    <property type="protein sequence ID" value="AAO70387.1"/>
    <property type="molecule type" value="Genomic_DNA"/>
</dbReference>
<dbReference type="RefSeq" id="NP_457318.1">
    <property type="nucleotide sequence ID" value="NC_003198.1"/>
</dbReference>
<dbReference type="RefSeq" id="WP_001219244.1">
    <property type="nucleotide sequence ID" value="NZ_WSUR01000005.1"/>
</dbReference>
<dbReference type="SMR" id="Q8Z472"/>
<dbReference type="STRING" id="220341.gene:17586945"/>
<dbReference type="KEGG" id="stt:t2830"/>
<dbReference type="KEGG" id="sty:STY3054"/>
<dbReference type="PATRIC" id="fig|220341.7.peg.3107"/>
<dbReference type="eggNOG" id="COG0245">
    <property type="taxonomic scope" value="Bacteria"/>
</dbReference>
<dbReference type="HOGENOM" id="CLU_084630_2_0_6"/>
<dbReference type="OMA" id="LIHAIMD"/>
<dbReference type="OrthoDB" id="9804336at2"/>
<dbReference type="UniPathway" id="UPA00056">
    <property type="reaction ID" value="UER00095"/>
</dbReference>
<dbReference type="Proteomes" id="UP000000541">
    <property type="component" value="Chromosome"/>
</dbReference>
<dbReference type="Proteomes" id="UP000002670">
    <property type="component" value="Chromosome"/>
</dbReference>
<dbReference type="GO" id="GO:0008685">
    <property type="term" value="F:2-C-methyl-D-erythritol 2,4-cyclodiphosphate synthase activity"/>
    <property type="evidence" value="ECO:0007669"/>
    <property type="project" value="UniProtKB-UniRule"/>
</dbReference>
<dbReference type="GO" id="GO:0046872">
    <property type="term" value="F:metal ion binding"/>
    <property type="evidence" value="ECO:0007669"/>
    <property type="project" value="UniProtKB-KW"/>
</dbReference>
<dbReference type="GO" id="GO:0019288">
    <property type="term" value="P:isopentenyl diphosphate biosynthetic process, methylerythritol 4-phosphate pathway"/>
    <property type="evidence" value="ECO:0007669"/>
    <property type="project" value="UniProtKB-UniRule"/>
</dbReference>
<dbReference type="GO" id="GO:0016114">
    <property type="term" value="P:terpenoid biosynthetic process"/>
    <property type="evidence" value="ECO:0007669"/>
    <property type="project" value="InterPro"/>
</dbReference>
<dbReference type="CDD" id="cd00554">
    <property type="entry name" value="MECDP_synthase"/>
    <property type="match status" value="1"/>
</dbReference>
<dbReference type="FunFam" id="3.30.1330.50:FF:000001">
    <property type="entry name" value="2-C-methyl-D-erythritol 2,4-cyclodiphosphate synthase"/>
    <property type="match status" value="1"/>
</dbReference>
<dbReference type="Gene3D" id="3.30.1330.50">
    <property type="entry name" value="2-C-methyl-D-erythritol 2,4-cyclodiphosphate synthase"/>
    <property type="match status" value="1"/>
</dbReference>
<dbReference type="HAMAP" id="MF_00107">
    <property type="entry name" value="IspF"/>
    <property type="match status" value="1"/>
</dbReference>
<dbReference type="InterPro" id="IPR003526">
    <property type="entry name" value="MECDP_synthase"/>
</dbReference>
<dbReference type="InterPro" id="IPR020555">
    <property type="entry name" value="MECDP_synthase_CS"/>
</dbReference>
<dbReference type="InterPro" id="IPR036571">
    <property type="entry name" value="MECDP_synthase_sf"/>
</dbReference>
<dbReference type="NCBIfam" id="TIGR00151">
    <property type="entry name" value="ispF"/>
    <property type="match status" value="1"/>
</dbReference>
<dbReference type="PANTHER" id="PTHR43181">
    <property type="entry name" value="2-C-METHYL-D-ERYTHRITOL 2,4-CYCLODIPHOSPHATE SYNTHASE, CHLOROPLASTIC"/>
    <property type="match status" value="1"/>
</dbReference>
<dbReference type="PANTHER" id="PTHR43181:SF1">
    <property type="entry name" value="2-C-METHYL-D-ERYTHRITOL 2,4-CYCLODIPHOSPHATE SYNTHASE, CHLOROPLASTIC"/>
    <property type="match status" value="1"/>
</dbReference>
<dbReference type="Pfam" id="PF02542">
    <property type="entry name" value="YgbB"/>
    <property type="match status" value="1"/>
</dbReference>
<dbReference type="SUPFAM" id="SSF69765">
    <property type="entry name" value="IpsF-like"/>
    <property type="match status" value="1"/>
</dbReference>
<dbReference type="PROSITE" id="PS01350">
    <property type="entry name" value="ISPF"/>
    <property type="match status" value="1"/>
</dbReference>
<sequence length="159" mass="16886">MRIGHGFDVHAFGGEGPIIIGGVRIPYEKGLLAHSDGDVALHALTDALLGAAALGDIGKLFPDTDPAFKGADSRELLREAWRRIQAKGYTLGNVDVTIIAQAPKMLPHIPQMRVFIAEDLGCHMDDVNVKATTTEKLGFTGRGEGIACEAVALLMKAAK</sequence>
<proteinExistence type="inferred from homology"/>
<evidence type="ECO:0000255" key="1">
    <source>
        <dbReference type="HAMAP-Rule" id="MF_00107"/>
    </source>
</evidence>
<gene>
    <name evidence="1" type="primary">ispF</name>
    <name type="ordered locus">STY3054</name>
    <name type="ordered locus">t2830</name>
</gene>
<feature type="chain" id="PRO_0000189500" description="2-C-methyl-D-erythritol 2,4-cyclodiphosphate synthase">
    <location>
        <begin position="1"/>
        <end position="159"/>
    </location>
</feature>
<feature type="binding site" evidence="1">
    <location>
        <begin position="8"/>
        <end position="10"/>
    </location>
    <ligand>
        <name>4-CDP-2-C-methyl-D-erythritol 2-phosphate</name>
        <dbReference type="ChEBI" id="CHEBI:57919"/>
    </ligand>
</feature>
<feature type="binding site" evidence="1">
    <location>
        <position position="8"/>
    </location>
    <ligand>
        <name>a divalent metal cation</name>
        <dbReference type="ChEBI" id="CHEBI:60240"/>
    </ligand>
</feature>
<feature type="binding site" evidence="1">
    <location>
        <position position="10"/>
    </location>
    <ligand>
        <name>a divalent metal cation</name>
        <dbReference type="ChEBI" id="CHEBI:60240"/>
    </ligand>
</feature>
<feature type="binding site" evidence="1">
    <location>
        <begin position="34"/>
        <end position="35"/>
    </location>
    <ligand>
        <name>4-CDP-2-C-methyl-D-erythritol 2-phosphate</name>
        <dbReference type="ChEBI" id="CHEBI:57919"/>
    </ligand>
</feature>
<feature type="binding site" evidence="1">
    <location>
        <position position="42"/>
    </location>
    <ligand>
        <name>a divalent metal cation</name>
        <dbReference type="ChEBI" id="CHEBI:60240"/>
    </ligand>
</feature>
<feature type="binding site" evidence="1">
    <location>
        <begin position="56"/>
        <end position="58"/>
    </location>
    <ligand>
        <name>4-CDP-2-C-methyl-D-erythritol 2-phosphate</name>
        <dbReference type="ChEBI" id="CHEBI:57919"/>
    </ligand>
</feature>
<feature type="binding site" evidence="1">
    <location>
        <begin position="61"/>
        <end position="65"/>
    </location>
    <ligand>
        <name>4-CDP-2-C-methyl-D-erythritol 2-phosphate</name>
        <dbReference type="ChEBI" id="CHEBI:57919"/>
    </ligand>
</feature>
<feature type="binding site" evidence="1">
    <location>
        <begin position="100"/>
        <end position="106"/>
    </location>
    <ligand>
        <name>4-CDP-2-C-methyl-D-erythritol 2-phosphate</name>
        <dbReference type="ChEBI" id="CHEBI:57919"/>
    </ligand>
</feature>
<feature type="binding site" evidence="1">
    <location>
        <begin position="132"/>
        <end position="135"/>
    </location>
    <ligand>
        <name>4-CDP-2-C-methyl-D-erythritol 2-phosphate</name>
        <dbReference type="ChEBI" id="CHEBI:57919"/>
    </ligand>
</feature>
<feature type="binding site" evidence="1">
    <location>
        <position position="139"/>
    </location>
    <ligand>
        <name>4-CDP-2-C-methyl-D-erythritol 2-phosphate</name>
        <dbReference type="ChEBI" id="CHEBI:57919"/>
    </ligand>
</feature>
<feature type="binding site" evidence="1">
    <location>
        <position position="142"/>
    </location>
    <ligand>
        <name>4-CDP-2-C-methyl-D-erythritol 2-phosphate</name>
        <dbReference type="ChEBI" id="CHEBI:57919"/>
    </ligand>
</feature>
<feature type="site" description="Transition state stabilizer" evidence="1">
    <location>
        <position position="34"/>
    </location>
</feature>
<feature type="site" description="Transition state stabilizer" evidence="1">
    <location>
        <position position="133"/>
    </location>
</feature>
<reference key="1">
    <citation type="journal article" date="2001" name="Nature">
        <title>Complete genome sequence of a multiple drug resistant Salmonella enterica serovar Typhi CT18.</title>
        <authorList>
            <person name="Parkhill J."/>
            <person name="Dougan G."/>
            <person name="James K.D."/>
            <person name="Thomson N.R."/>
            <person name="Pickard D."/>
            <person name="Wain J."/>
            <person name="Churcher C.M."/>
            <person name="Mungall K.L."/>
            <person name="Bentley S.D."/>
            <person name="Holden M.T.G."/>
            <person name="Sebaihia M."/>
            <person name="Baker S."/>
            <person name="Basham D."/>
            <person name="Brooks K."/>
            <person name="Chillingworth T."/>
            <person name="Connerton P."/>
            <person name="Cronin A."/>
            <person name="Davis P."/>
            <person name="Davies R.M."/>
            <person name="Dowd L."/>
            <person name="White N."/>
            <person name="Farrar J."/>
            <person name="Feltwell T."/>
            <person name="Hamlin N."/>
            <person name="Haque A."/>
            <person name="Hien T.T."/>
            <person name="Holroyd S."/>
            <person name="Jagels K."/>
            <person name="Krogh A."/>
            <person name="Larsen T.S."/>
            <person name="Leather S."/>
            <person name="Moule S."/>
            <person name="O'Gaora P."/>
            <person name="Parry C."/>
            <person name="Quail M.A."/>
            <person name="Rutherford K.M."/>
            <person name="Simmonds M."/>
            <person name="Skelton J."/>
            <person name="Stevens K."/>
            <person name="Whitehead S."/>
            <person name="Barrell B.G."/>
        </authorList>
    </citation>
    <scope>NUCLEOTIDE SEQUENCE [LARGE SCALE GENOMIC DNA]</scope>
    <source>
        <strain>CT18</strain>
    </source>
</reference>
<reference key="2">
    <citation type="journal article" date="2003" name="J. Bacteriol.">
        <title>Comparative genomics of Salmonella enterica serovar Typhi strains Ty2 and CT18.</title>
        <authorList>
            <person name="Deng W."/>
            <person name="Liou S.-R."/>
            <person name="Plunkett G. III"/>
            <person name="Mayhew G.F."/>
            <person name="Rose D.J."/>
            <person name="Burland V."/>
            <person name="Kodoyianni V."/>
            <person name="Schwartz D.C."/>
            <person name="Blattner F.R."/>
        </authorList>
    </citation>
    <scope>NUCLEOTIDE SEQUENCE [LARGE SCALE GENOMIC DNA]</scope>
    <source>
        <strain>ATCC 700931 / Ty2</strain>
    </source>
</reference>
<comment type="function">
    <text evidence="1">Involved in the biosynthesis of isopentenyl diphosphate (IPP) and dimethylallyl diphosphate (DMAPP), two major building blocks of isoprenoid compounds. Catalyzes the conversion of 4-diphosphocytidyl-2-C-methyl-D-erythritol 2-phosphate (CDP-ME2P) to 2-C-methyl-D-erythritol 2,4-cyclodiphosphate (ME-CPP) with a corresponding release of cytidine 5-monophosphate (CMP).</text>
</comment>
<comment type="catalytic activity">
    <reaction evidence="1">
        <text>4-CDP-2-C-methyl-D-erythritol 2-phosphate = 2-C-methyl-D-erythritol 2,4-cyclic diphosphate + CMP</text>
        <dbReference type="Rhea" id="RHEA:23864"/>
        <dbReference type="ChEBI" id="CHEBI:57919"/>
        <dbReference type="ChEBI" id="CHEBI:58483"/>
        <dbReference type="ChEBI" id="CHEBI:60377"/>
        <dbReference type="EC" id="4.6.1.12"/>
    </reaction>
</comment>
<comment type="cofactor">
    <cofactor evidence="1">
        <name>a divalent metal cation</name>
        <dbReference type="ChEBI" id="CHEBI:60240"/>
    </cofactor>
    <text evidence="1">Binds 1 divalent metal cation per subunit.</text>
</comment>
<comment type="pathway">
    <text evidence="1">Isoprenoid biosynthesis; isopentenyl diphosphate biosynthesis via DXP pathway; isopentenyl diphosphate from 1-deoxy-D-xylulose 5-phosphate: step 4/6.</text>
</comment>
<comment type="subunit">
    <text evidence="1">Homotrimer.</text>
</comment>
<comment type="similarity">
    <text evidence="1">Belongs to the IspF family.</text>
</comment>
<keyword id="KW-0414">Isoprene biosynthesis</keyword>
<keyword id="KW-0456">Lyase</keyword>
<keyword id="KW-0479">Metal-binding</keyword>
<accession>Q8Z472</accession>
<name>ISPF_SALTI</name>
<protein>
    <recommendedName>
        <fullName evidence="1">2-C-methyl-D-erythritol 2,4-cyclodiphosphate synthase</fullName>
        <shortName evidence="1">MECDP-synthase</shortName>
        <shortName evidence="1">MECPP-synthase</shortName>
        <shortName evidence="1">MECPS</shortName>
        <ecNumber evidence="1">4.6.1.12</ecNumber>
    </recommendedName>
</protein>
<organism>
    <name type="scientific">Salmonella typhi</name>
    <dbReference type="NCBI Taxonomy" id="90370"/>
    <lineage>
        <taxon>Bacteria</taxon>
        <taxon>Pseudomonadati</taxon>
        <taxon>Pseudomonadota</taxon>
        <taxon>Gammaproteobacteria</taxon>
        <taxon>Enterobacterales</taxon>
        <taxon>Enterobacteriaceae</taxon>
        <taxon>Salmonella</taxon>
    </lineage>
</organism>